<feature type="chain" id="PRO_0000354747" description="Catalase-peroxidase">
    <location>
        <begin position="1"/>
        <end position="728"/>
    </location>
</feature>
<feature type="active site" description="Proton acceptor" evidence="1">
    <location>
        <position position="92"/>
    </location>
</feature>
<feature type="binding site" description="axial binding residue" evidence="1">
    <location>
        <position position="259"/>
    </location>
    <ligand>
        <name>heme b</name>
        <dbReference type="ChEBI" id="CHEBI:60344"/>
    </ligand>
    <ligandPart>
        <name>Fe</name>
        <dbReference type="ChEBI" id="CHEBI:18248"/>
    </ligandPart>
</feature>
<feature type="site" description="Transition state stabilizer" evidence="1">
    <location>
        <position position="88"/>
    </location>
</feature>
<feature type="cross-link" description="Tryptophyl-tyrosyl-methioninium (Trp-Tyr) (with M-244)" evidence="1">
    <location>
        <begin position="91"/>
        <end position="218"/>
    </location>
</feature>
<feature type="cross-link" description="Tryptophyl-tyrosyl-methioninium (Tyr-Met) (with W-91)" evidence="1">
    <location>
        <begin position="218"/>
        <end position="244"/>
    </location>
</feature>
<accession>A3NZ22</accession>
<reference key="1">
    <citation type="journal article" date="2010" name="Genome Biol. Evol.">
        <title>Continuing evolution of Burkholderia mallei through genome reduction and large-scale rearrangements.</title>
        <authorList>
            <person name="Losada L."/>
            <person name="Ronning C.M."/>
            <person name="DeShazer D."/>
            <person name="Woods D."/>
            <person name="Fedorova N."/>
            <person name="Kim H.S."/>
            <person name="Shabalina S.A."/>
            <person name="Pearson T.R."/>
            <person name="Brinkac L."/>
            <person name="Tan P."/>
            <person name="Nandi T."/>
            <person name="Crabtree J."/>
            <person name="Badger J."/>
            <person name="Beckstrom-Sternberg S."/>
            <person name="Saqib M."/>
            <person name="Schutzer S.E."/>
            <person name="Keim P."/>
            <person name="Nierman W.C."/>
        </authorList>
    </citation>
    <scope>NUCLEOTIDE SEQUENCE [LARGE SCALE GENOMIC DNA]</scope>
    <source>
        <strain>1106a</strain>
    </source>
</reference>
<gene>
    <name evidence="1" type="primary">katG</name>
    <name type="ordered locus">BURPS1106A_3356</name>
</gene>
<proteinExistence type="inferred from homology"/>
<organism>
    <name type="scientific">Burkholderia pseudomallei (strain 1106a)</name>
    <dbReference type="NCBI Taxonomy" id="357348"/>
    <lineage>
        <taxon>Bacteria</taxon>
        <taxon>Pseudomonadati</taxon>
        <taxon>Pseudomonadota</taxon>
        <taxon>Betaproteobacteria</taxon>
        <taxon>Burkholderiales</taxon>
        <taxon>Burkholderiaceae</taxon>
        <taxon>Burkholderia</taxon>
        <taxon>pseudomallei group</taxon>
    </lineage>
</organism>
<sequence>MSNEAKCPFHQAAGNGTSNRDWWPNQLDLSILHRHSSLSDPMGKDFNYAQAFEKLDLAAVKRDLHALMTTSQDWWPADFGHYGGLFIRMAWHSAGTYRTADGRGGAGEGQQRFAPLNSWPDNANLDKARRLLWPIKQKYGRAISWADLLILTGNVALESMGFKTFGFAGGRADTWEPEDVYWGSEKIWLELSGGPNSRYSGDRQLENPLAAVQMGLIYVNPEGPDGNPDPVAAARDIRDTFARMAMNDEETVALIAGGHTFGKTHGAGPASNVGAEPEAAGIEAQGLGWKSAYRTGKGADAITSGLEVTWTTTPTQWSHNFFENLFGYEWELTKSPAGAHQWVAKGADAVIPDAFDPSKKHRPTMLTTDLSLRFDPAYEKISRRFHENPEQFADAFARAWFKLTHRDMGPRARYLGPEVPAEVLLWQDPIPAVDHPLIDAADAAELKAKVLASGLTVSQLVSTAWAAASTFRGSDKRGGANGARIRLAPQKDWEANQPEQLAAVLETLEAIRTAFNGAQRGGKQVSLADLIVLAGCAGVEQAAKNAGHAVTVPFAPGRADASQEQTDVESMAVLEPVADGFRNYLKGKYRVPAEVLLVDKAQLLTLSAPEMTVLLGGLRVLGANVGQSRHGVFTAREQALTNDFFVNLLDMGTEWKPTAADADVFEGRDRATGALKWTGTRVDLVFGSHSQLRALAEVYGSADAQEKFVRDFVAVWNKVMNLDRFDLA</sequence>
<name>KATG_BURP0</name>
<keyword id="KW-0349">Heme</keyword>
<keyword id="KW-0376">Hydrogen peroxide</keyword>
<keyword id="KW-0408">Iron</keyword>
<keyword id="KW-0479">Metal-binding</keyword>
<keyword id="KW-0560">Oxidoreductase</keyword>
<keyword id="KW-0575">Peroxidase</keyword>
<evidence type="ECO:0000255" key="1">
    <source>
        <dbReference type="HAMAP-Rule" id="MF_01961"/>
    </source>
</evidence>
<protein>
    <recommendedName>
        <fullName evidence="1">Catalase-peroxidase</fullName>
        <shortName evidence="1">CP</shortName>
        <ecNumber evidence="1">1.11.1.21</ecNumber>
    </recommendedName>
    <alternativeName>
        <fullName evidence="1">Peroxidase/catalase</fullName>
    </alternativeName>
</protein>
<dbReference type="EC" id="1.11.1.21" evidence="1"/>
<dbReference type="EMBL" id="CP000572">
    <property type="protein sequence ID" value="ABN91582.1"/>
    <property type="molecule type" value="Genomic_DNA"/>
</dbReference>
<dbReference type="RefSeq" id="WP_004194237.1">
    <property type="nucleotide sequence ID" value="NC_009076.1"/>
</dbReference>
<dbReference type="SMR" id="A3NZ22"/>
<dbReference type="GeneID" id="93061455"/>
<dbReference type="KEGG" id="bpl:BURPS1106A_3356"/>
<dbReference type="HOGENOM" id="CLU_025424_2_0_4"/>
<dbReference type="Proteomes" id="UP000006738">
    <property type="component" value="Chromosome I"/>
</dbReference>
<dbReference type="GO" id="GO:0005829">
    <property type="term" value="C:cytosol"/>
    <property type="evidence" value="ECO:0007669"/>
    <property type="project" value="TreeGrafter"/>
</dbReference>
<dbReference type="GO" id="GO:0004096">
    <property type="term" value="F:catalase activity"/>
    <property type="evidence" value="ECO:0007669"/>
    <property type="project" value="UniProtKB-UniRule"/>
</dbReference>
<dbReference type="GO" id="GO:0020037">
    <property type="term" value="F:heme binding"/>
    <property type="evidence" value="ECO:0007669"/>
    <property type="project" value="InterPro"/>
</dbReference>
<dbReference type="GO" id="GO:0046872">
    <property type="term" value="F:metal ion binding"/>
    <property type="evidence" value="ECO:0007669"/>
    <property type="project" value="UniProtKB-KW"/>
</dbReference>
<dbReference type="GO" id="GO:0070301">
    <property type="term" value="P:cellular response to hydrogen peroxide"/>
    <property type="evidence" value="ECO:0007669"/>
    <property type="project" value="TreeGrafter"/>
</dbReference>
<dbReference type="GO" id="GO:0042744">
    <property type="term" value="P:hydrogen peroxide catabolic process"/>
    <property type="evidence" value="ECO:0007669"/>
    <property type="project" value="UniProtKB-KW"/>
</dbReference>
<dbReference type="CDD" id="cd00649">
    <property type="entry name" value="catalase_peroxidase_1"/>
    <property type="match status" value="1"/>
</dbReference>
<dbReference type="CDD" id="cd08200">
    <property type="entry name" value="catalase_peroxidase_2"/>
    <property type="match status" value="1"/>
</dbReference>
<dbReference type="FunFam" id="1.10.420.10:FF:000002">
    <property type="entry name" value="Catalase-peroxidase"/>
    <property type="match status" value="1"/>
</dbReference>
<dbReference type="FunFam" id="1.10.420.10:FF:000004">
    <property type="entry name" value="Catalase-peroxidase"/>
    <property type="match status" value="1"/>
</dbReference>
<dbReference type="FunFam" id="1.10.520.10:FF:000002">
    <property type="entry name" value="Catalase-peroxidase"/>
    <property type="match status" value="1"/>
</dbReference>
<dbReference type="FunFam" id="1.10.520.10:FF:000004">
    <property type="entry name" value="Catalase-peroxidase"/>
    <property type="match status" value="1"/>
</dbReference>
<dbReference type="Gene3D" id="1.10.520.10">
    <property type="match status" value="2"/>
</dbReference>
<dbReference type="Gene3D" id="1.10.420.10">
    <property type="entry name" value="Peroxidase, domain 2"/>
    <property type="match status" value="2"/>
</dbReference>
<dbReference type="HAMAP" id="MF_01961">
    <property type="entry name" value="Catal_peroxid"/>
    <property type="match status" value="1"/>
</dbReference>
<dbReference type="InterPro" id="IPR000763">
    <property type="entry name" value="Catalase_peroxidase"/>
</dbReference>
<dbReference type="InterPro" id="IPR002016">
    <property type="entry name" value="Haem_peroxidase"/>
</dbReference>
<dbReference type="InterPro" id="IPR010255">
    <property type="entry name" value="Haem_peroxidase_sf"/>
</dbReference>
<dbReference type="InterPro" id="IPR019794">
    <property type="entry name" value="Peroxidases_AS"/>
</dbReference>
<dbReference type="InterPro" id="IPR019793">
    <property type="entry name" value="Peroxidases_heam-ligand_BS"/>
</dbReference>
<dbReference type="NCBIfam" id="TIGR00198">
    <property type="entry name" value="cat_per_HPI"/>
    <property type="match status" value="1"/>
</dbReference>
<dbReference type="NCBIfam" id="NF011635">
    <property type="entry name" value="PRK15061.1"/>
    <property type="match status" value="1"/>
</dbReference>
<dbReference type="PANTHER" id="PTHR30555:SF0">
    <property type="entry name" value="CATALASE-PEROXIDASE"/>
    <property type="match status" value="1"/>
</dbReference>
<dbReference type="PANTHER" id="PTHR30555">
    <property type="entry name" value="HYDROPEROXIDASE I, BIFUNCTIONAL CATALASE-PEROXIDASE"/>
    <property type="match status" value="1"/>
</dbReference>
<dbReference type="Pfam" id="PF00141">
    <property type="entry name" value="peroxidase"/>
    <property type="match status" value="2"/>
</dbReference>
<dbReference type="PRINTS" id="PR00460">
    <property type="entry name" value="BPEROXIDASE"/>
</dbReference>
<dbReference type="PRINTS" id="PR00458">
    <property type="entry name" value="PEROXIDASE"/>
</dbReference>
<dbReference type="SUPFAM" id="SSF48113">
    <property type="entry name" value="Heme-dependent peroxidases"/>
    <property type="match status" value="2"/>
</dbReference>
<dbReference type="PROSITE" id="PS00435">
    <property type="entry name" value="PEROXIDASE_1"/>
    <property type="match status" value="1"/>
</dbReference>
<dbReference type="PROSITE" id="PS00436">
    <property type="entry name" value="PEROXIDASE_2"/>
    <property type="match status" value="1"/>
</dbReference>
<dbReference type="PROSITE" id="PS50873">
    <property type="entry name" value="PEROXIDASE_4"/>
    <property type="match status" value="1"/>
</dbReference>
<comment type="function">
    <text evidence="1">Bifunctional enzyme with both catalase and broad-spectrum peroxidase activity.</text>
</comment>
<comment type="catalytic activity">
    <reaction evidence="1">
        <text>H2O2 + AH2 = A + 2 H2O</text>
        <dbReference type="Rhea" id="RHEA:30275"/>
        <dbReference type="ChEBI" id="CHEBI:13193"/>
        <dbReference type="ChEBI" id="CHEBI:15377"/>
        <dbReference type="ChEBI" id="CHEBI:16240"/>
        <dbReference type="ChEBI" id="CHEBI:17499"/>
        <dbReference type="EC" id="1.11.1.21"/>
    </reaction>
</comment>
<comment type="catalytic activity">
    <reaction evidence="1">
        <text>2 H2O2 = O2 + 2 H2O</text>
        <dbReference type="Rhea" id="RHEA:20309"/>
        <dbReference type="ChEBI" id="CHEBI:15377"/>
        <dbReference type="ChEBI" id="CHEBI:15379"/>
        <dbReference type="ChEBI" id="CHEBI:16240"/>
        <dbReference type="EC" id="1.11.1.21"/>
    </reaction>
</comment>
<comment type="cofactor">
    <cofactor evidence="1">
        <name>heme b</name>
        <dbReference type="ChEBI" id="CHEBI:60344"/>
    </cofactor>
    <text evidence="1">Binds 1 heme b (iron(II)-protoporphyrin IX) group per dimer.</text>
</comment>
<comment type="subunit">
    <text evidence="1">Homodimer or homotetramer.</text>
</comment>
<comment type="PTM">
    <text evidence="1">Formation of the three residue Trp-Tyr-Met cross-link is important for the catalase, but not the peroxidase activity of the enzyme.</text>
</comment>
<comment type="similarity">
    <text evidence="1">Belongs to the peroxidase family. Peroxidase/catalase subfamily.</text>
</comment>